<keyword id="KW-0007">Acetylation</keyword>
<keyword id="KW-0025">Alternative splicing</keyword>
<keyword id="KW-0175">Coiled coil</keyword>
<keyword id="KW-0963">Cytoplasm</keyword>
<keyword id="KW-0391">Immunity</keyword>
<keyword id="KW-0399">Innate immunity</keyword>
<keyword id="KW-0479">Metal-binding</keyword>
<keyword id="KW-0597">Phosphoprotein</keyword>
<keyword id="KW-1185">Reference proteome</keyword>
<keyword id="KW-0808">Transferase</keyword>
<keyword id="KW-0862">Zinc</keyword>
<keyword id="KW-0863">Zinc-finger</keyword>
<reference key="1">
    <citation type="journal article" date="2005" name="Science">
        <title>The transcriptional landscape of the mammalian genome.</title>
        <authorList>
            <person name="Carninci P."/>
            <person name="Kasukawa T."/>
            <person name="Katayama S."/>
            <person name="Gough J."/>
            <person name="Frith M.C."/>
            <person name="Maeda N."/>
            <person name="Oyama R."/>
            <person name="Ravasi T."/>
            <person name="Lenhard B."/>
            <person name="Wells C."/>
            <person name="Kodzius R."/>
            <person name="Shimokawa K."/>
            <person name="Bajic V.B."/>
            <person name="Brenner S.E."/>
            <person name="Batalov S."/>
            <person name="Forrest A.R."/>
            <person name="Zavolan M."/>
            <person name="Davis M.J."/>
            <person name="Wilming L.G."/>
            <person name="Aidinis V."/>
            <person name="Allen J.E."/>
            <person name="Ambesi-Impiombato A."/>
            <person name="Apweiler R."/>
            <person name="Aturaliya R.N."/>
            <person name="Bailey T.L."/>
            <person name="Bansal M."/>
            <person name="Baxter L."/>
            <person name="Beisel K.W."/>
            <person name="Bersano T."/>
            <person name="Bono H."/>
            <person name="Chalk A.M."/>
            <person name="Chiu K.P."/>
            <person name="Choudhary V."/>
            <person name="Christoffels A."/>
            <person name="Clutterbuck D.R."/>
            <person name="Crowe M.L."/>
            <person name="Dalla E."/>
            <person name="Dalrymple B.P."/>
            <person name="de Bono B."/>
            <person name="Della Gatta G."/>
            <person name="di Bernardo D."/>
            <person name="Down T."/>
            <person name="Engstrom P."/>
            <person name="Fagiolini M."/>
            <person name="Faulkner G."/>
            <person name="Fletcher C.F."/>
            <person name="Fukushima T."/>
            <person name="Furuno M."/>
            <person name="Futaki S."/>
            <person name="Gariboldi M."/>
            <person name="Georgii-Hemming P."/>
            <person name="Gingeras T.R."/>
            <person name="Gojobori T."/>
            <person name="Green R.E."/>
            <person name="Gustincich S."/>
            <person name="Harbers M."/>
            <person name="Hayashi Y."/>
            <person name="Hensch T.K."/>
            <person name="Hirokawa N."/>
            <person name="Hill D."/>
            <person name="Huminiecki L."/>
            <person name="Iacono M."/>
            <person name="Ikeo K."/>
            <person name="Iwama A."/>
            <person name="Ishikawa T."/>
            <person name="Jakt M."/>
            <person name="Kanapin A."/>
            <person name="Katoh M."/>
            <person name="Kawasawa Y."/>
            <person name="Kelso J."/>
            <person name="Kitamura H."/>
            <person name="Kitano H."/>
            <person name="Kollias G."/>
            <person name="Krishnan S.P."/>
            <person name="Kruger A."/>
            <person name="Kummerfeld S.K."/>
            <person name="Kurochkin I.V."/>
            <person name="Lareau L.F."/>
            <person name="Lazarevic D."/>
            <person name="Lipovich L."/>
            <person name="Liu J."/>
            <person name="Liuni S."/>
            <person name="McWilliam S."/>
            <person name="Madan Babu M."/>
            <person name="Madera M."/>
            <person name="Marchionni L."/>
            <person name="Matsuda H."/>
            <person name="Matsuzawa S."/>
            <person name="Miki H."/>
            <person name="Mignone F."/>
            <person name="Miyake S."/>
            <person name="Morris K."/>
            <person name="Mottagui-Tabar S."/>
            <person name="Mulder N."/>
            <person name="Nakano N."/>
            <person name="Nakauchi H."/>
            <person name="Ng P."/>
            <person name="Nilsson R."/>
            <person name="Nishiguchi S."/>
            <person name="Nishikawa S."/>
            <person name="Nori F."/>
            <person name="Ohara O."/>
            <person name="Okazaki Y."/>
            <person name="Orlando V."/>
            <person name="Pang K.C."/>
            <person name="Pavan W.J."/>
            <person name="Pavesi G."/>
            <person name="Pesole G."/>
            <person name="Petrovsky N."/>
            <person name="Piazza S."/>
            <person name="Reed J."/>
            <person name="Reid J.F."/>
            <person name="Ring B.Z."/>
            <person name="Ringwald M."/>
            <person name="Rost B."/>
            <person name="Ruan Y."/>
            <person name="Salzberg S.L."/>
            <person name="Sandelin A."/>
            <person name="Schneider C."/>
            <person name="Schoenbach C."/>
            <person name="Sekiguchi K."/>
            <person name="Semple C.A."/>
            <person name="Seno S."/>
            <person name="Sessa L."/>
            <person name="Sheng Y."/>
            <person name="Shibata Y."/>
            <person name="Shimada H."/>
            <person name="Shimada K."/>
            <person name="Silva D."/>
            <person name="Sinclair B."/>
            <person name="Sperling S."/>
            <person name="Stupka E."/>
            <person name="Sugiura K."/>
            <person name="Sultana R."/>
            <person name="Takenaka Y."/>
            <person name="Taki K."/>
            <person name="Tammoja K."/>
            <person name="Tan S.L."/>
            <person name="Tang S."/>
            <person name="Taylor M.S."/>
            <person name="Tegner J."/>
            <person name="Teichmann S.A."/>
            <person name="Ueda H.R."/>
            <person name="van Nimwegen E."/>
            <person name="Verardo R."/>
            <person name="Wei C.L."/>
            <person name="Yagi K."/>
            <person name="Yamanishi H."/>
            <person name="Zabarovsky E."/>
            <person name="Zhu S."/>
            <person name="Zimmer A."/>
            <person name="Hide W."/>
            <person name="Bult C."/>
            <person name="Grimmond S.M."/>
            <person name="Teasdale R.D."/>
            <person name="Liu E.T."/>
            <person name="Brusic V."/>
            <person name="Quackenbush J."/>
            <person name="Wahlestedt C."/>
            <person name="Mattick J.S."/>
            <person name="Hume D.A."/>
            <person name="Kai C."/>
            <person name="Sasaki D."/>
            <person name="Tomaru Y."/>
            <person name="Fukuda S."/>
            <person name="Kanamori-Katayama M."/>
            <person name="Suzuki M."/>
            <person name="Aoki J."/>
            <person name="Arakawa T."/>
            <person name="Iida J."/>
            <person name="Imamura K."/>
            <person name="Itoh M."/>
            <person name="Kato T."/>
            <person name="Kawaji H."/>
            <person name="Kawagashira N."/>
            <person name="Kawashima T."/>
            <person name="Kojima M."/>
            <person name="Kondo S."/>
            <person name="Konno H."/>
            <person name="Nakano K."/>
            <person name="Ninomiya N."/>
            <person name="Nishio T."/>
            <person name="Okada M."/>
            <person name="Plessy C."/>
            <person name="Shibata K."/>
            <person name="Shiraki T."/>
            <person name="Suzuki S."/>
            <person name="Tagami M."/>
            <person name="Waki K."/>
            <person name="Watahiki A."/>
            <person name="Okamura-Oho Y."/>
            <person name="Suzuki H."/>
            <person name="Kawai J."/>
            <person name="Hayashizaki Y."/>
        </authorList>
    </citation>
    <scope>NUCLEOTIDE SEQUENCE [LARGE SCALE MRNA] (ISOFORM 1)</scope>
    <source>
        <strain>C57BL/6J</strain>
        <tissue>Liver</tissue>
        <tissue>Skin</tissue>
    </source>
</reference>
<reference key="2">
    <citation type="journal article" date="2009" name="PLoS Biol.">
        <title>Lineage-specific biology revealed by a finished genome assembly of the mouse.</title>
        <authorList>
            <person name="Church D.M."/>
            <person name="Goodstadt L."/>
            <person name="Hillier L.W."/>
            <person name="Zody M.C."/>
            <person name="Goldstein S."/>
            <person name="She X."/>
            <person name="Bult C.J."/>
            <person name="Agarwala R."/>
            <person name="Cherry J.L."/>
            <person name="DiCuccio M."/>
            <person name="Hlavina W."/>
            <person name="Kapustin Y."/>
            <person name="Meric P."/>
            <person name="Maglott D."/>
            <person name="Birtle Z."/>
            <person name="Marques A.C."/>
            <person name="Graves T."/>
            <person name="Zhou S."/>
            <person name="Teague B."/>
            <person name="Potamousis K."/>
            <person name="Churas C."/>
            <person name="Place M."/>
            <person name="Herschleb J."/>
            <person name="Runnheim R."/>
            <person name="Forrest D."/>
            <person name="Amos-Landgraf J."/>
            <person name="Schwartz D.C."/>
            <person name="Cheng Z."/>
            <person name="Lindblad-Toh K."/>
            <person name="Eichler E.E."/>
            <person name="Ponting C.P."/>
        </authorList>
    </citation>
    <scope>NUCLEOTIDE SEQUENCE [LARGE SCALE GENOMIC DNA]</scope>
    <source>
        <strain>C57BL/6J</strain>
    </source>
</reference>
<reference key="3">
    <citation type="journal article" date="2004" name="Genome Res.">
        <title>The status, quality, and expansion of the NIH full-length cDNA project: the Mammalian Gene Collection (MGC).</title>
        <authorList>
            <consortium name="The MGC Project Team"/>
        </authorList>
    </citation>
    <scope>NUCLEOTIDE SEQUENCE [LARGE SCALE MRNA] (ISOFORM 2)</scope>
    <source>
        <strain>C57BL/6J</strain>
        <tissue>Brain</tissue>
    </source>
</reference>
<reference key="4">
    <citation type="journal article" date="2010" name="Cell">
        <title>A tissue-specific atlas of mouse protein phosphorylation and expression.</title>
        <authorList>
            <person name="Huttlin E.L."/>
            <person name="Jedrychowski M.P."/>
            <person name="Elias J.E."/>
            <person name="Goswami T."/>
            <person name="Rad R."/>
            <person name="Beausoleil S.A."/>
            <person name="Villen J."/>
            <person name="Haas W."/>
            <person name="Sowa M.E."/>
            <person name="Gygi S.P."/>
        </authorList>
    </citation>
    <scope>PHOSPHORYLATION [LARGE SCALE ANALYSIS] AT SER-187</scope>
    <scope>IDENTIFICATION BY MASS SPECTROMETRY [LARGE SCALE ANALYSIS]</scope>
    <source>
        <tissue>Brown adipose tissue</tissue>
        <tissue>Lung</tissue>
        <tissue>Spleen</tissue>
    </source>
</reference>
<reference key="5">
    <citation type="journal article" date="2020" name="J. Mol. Cell Biol.">
        <title>TRIM65 E3 ligase targets VCAM-1 degradation to limit LPS-induced lung inflammation.</title>
        <authorList>
            <person name="Li Y."/>
            <person name="Huang X."/>
            <person name="Guo F."/>
            <person name="Lei T."/>
            <person name="Li S."/>
            <person name="Monaghan-Nichols P."/>
            <person name="Jiang Z."/>
            <person name="Xin H.B."/>
            <person name="Fu M."/>
        </authorList>
    </citation>
    <scope>FUNCTION</scope>
    <scope>DISRUPTION PHENOTYPE</scope>
</reference>
<reference key="6">
    <citation type="journal article" date="2021" name="Front. Immunol.">
        <title>The E3 Ubiquitin Ligase TRIM65 Negatively Regulates Inflammasome Activation Through Promoting Ubiquitination of NLRP3.</title>
        <authorList>
            <person name="Tang T."/>
            <person name="Li P."/>
            <person name="Zhou X."/>
            <person name="Wang R."/>
            <person name="Fan X."/>
            <person name="Yang M."/>
            <person name="Qi K."/>
        </authorList>
    </citation>
    <scope>FUNCTION</scope>
    <scope>DISRUPTION PHENOTYPE</scope>
</reference>
<gene>
    <name type="primary">Trim65</name>
</gene>
<dbReference type="EC" id="2.3.2.27" evidence="1"/>
<dbReference type="EMBL" id="AK028857">
    <property type="protein sequence ID" value="BAC26156.1"/>
    <property type="molecule type" value="mRNA"/>
</dbReference>
<dbReference type="EMBL" id="AK050080">
    <property type="protein sequence ID" value="BAC34060.1"/>
    <property type="molecule type" value="mRNA"/>
</dbReference>
<dbReference type="EMBL" id="AL607108">
    <property type="status" value="NOT_ANNOTATED_CDS"/>
    <property type="molecule type" value="Genomic_DNA"/>
</dbReference>
<dbReference type="EMBL" id="BC057094">
    <property type="protein sequence ID" value="AAH57094.1"/>
    <property type="molecule type" value="mRNA"/>
</dbReference>
<dbReference type="CCDS" id="CCDS48981.1">
    <molecule id="Q8BFW4-1"/>
</dbReference>
<dbReference type="RefSeq" id="NP_848917.2">
    <molecule id="Q8BFW4-1"/>
    <property type="nucleotide sequence ID" value="NM_178802.4"/>
</dbReference>
<dbReference type="RefSeq" id="XP_036012675.1">
    <molecule id="Q8BFW4-2"/>
    <property type="nucleotide sequence ID" value="XM_036156782.1"/>
</dbReference>
<dbReference type="SMR" id="Q8BFW4"/>
<dbReference type="BioGRID" id="237216">
    <property type="interactions" value="5"/>
</dbReference>
<dbReference type="FunCoup" id="Q8BFW4">
    <property type="interactions" value="1515"/>
</dbReference>
<dbReference type="STRING" id="10090.ENSMUSP00000063410"/>
<dbReference type="GlyGen" id="Q8BFW4">
    <property type="glycosylation" value="1 site"/>
</dbReference>
<dbReference type="iPTMnet" id="Q8BFW4"/>
<dbReference type="PhosphoSitePlus" id="Q8BFW4"/>
<dbReference type="PaxDb" id="10090-ENSMUSP00000063410"/>
<dbReference type="PeptideAtlas" id="Q8BFW4"/>
<dbReference type="ProteomicsDB" id="259326">
    <molecule id="Q8BFW4-1"/>
</dbReference>
<dbReference type="ProteomicsDB" id="259327">
    <molecule id="Q8BFW4-2"/>
</dbReference>
<dbReference type="Pumba" id="Q8BFW4"/>
<dbReference type="Antibodypedia" id="19643">
    <property type="antibodies" value="93 antibodies from 15 providers"/>
</dbReference>
<dbReference type="DNASU" id="338364"/>
<dbReference type="Ensembl" id="ENSMUST00000067632.4">
    <molecule id="Q8BFW4-1"/>
    <property type="protein sequence ID" value="ENSMUSP00000063410.4"/>
    <property type="gene ID" value="ENSMUSG00000054517.10"/>
</dbReference>
<dbReference type="Ensembl" id="ENSMUST00000106440.9">
    <molecule id="Q8BFW4-2"/>
    <property type="protein sequence ID" value="ENSMUSP00000102048.3"/>
    <property type="gene ID" value="ENSMUSG00000054517.10"/>
</dbReference>
<dbReference type="GeneID" id="338364"/>
<dbReference type="KEGG" id="mmu:338364"/>
<dbReference type="UCSC" id="uc007mjz.1">
    <molecule id="Q8BFW4-2"/>
    <property type="organism name" value="mouse"/>
</dbReference>
<dbReference type="UCSC" id="uc007mkb.2">
    <molecule id="Q8BFW4-1"/>
    <property type="organism name" value="mouse"/>
</dbReference>
<dbReference type="AGR" id="MGI:2442815"/>
<dbReference type="CTD" id="201292"/>
<dbReference type="MGI" id="MGI:2442815">
    <property type="gene designation" value="Trim65"/>
</dbReference>
<dbReference type="VEuPathDB" id="HostDB:ENSMUSG00000054517"/>
<dbReference type="eggNOG" id="KOG2177">
    <property type="taxonomic scope" value="Eukaryota"/>
</dbReference>
<dbReference type="GeneTree" id="ENSGT00940000161851"/>
<dbReference type="HOGENOM" id="CLU_013137_0_2_1"/>
<dbReference type="InParanoid" id="Q8BFW4"/>
<dbReference type="OMA" id="ACTVNEC"/>
<dbReference type="OrthoDB" id="5951542at2759"/>
<dbReference type="PhylomeDB" id="Q8BFW4"/>
<dbReference type="TreeFam" id="TF351090"/>
<dbReference type="UniPathway" id="UPA00143"/>
<dbReference type="BioGRID-ORCS" id="338364">
    <property type="hits" value="2 hits in 78 CRISPR screens"/>
</dbReference>
<dbReference type="ChiTaRS" id="Trim65">
    <property type="organism name" value="mouse"/>
</dbReference>
<dbReference type="PRO" id="PR:Q8BFW4"/>
<dbReference type="Proteomes" id="UP000000589">
    <property type="component" value="Chromosome 11"/>
</dbReference>
<dbReference type="RNAct" id="Q8BFW4">
    <property type="molecule type" value="protein"/>
</dbReference>
<dbReference type="Bgee" id="ENSMUSG00000054517">
    <property type="expression patterns" value="Expressed in aortic valve and 123 other cell types or tissues"/>
</dbReference>
<dbReference type="GO" id="GO:0005737">
    <property type="term" value="C:cytoplasm"/>
    <property type="evidence" value="ECO:0000314"/>
    <property type="project" value="MGI"/>
</dbReference>
<dbReference type="GO" id="GO:0005829">
    <property type="term" value="C:cytosol"/>
    <property type="evidence" value="ECO:0007669"/>
    <property type="project" value="Ensembl"/>
</dbReference>
<dbReference type="GO" id="GO:0005654">
    <property type="term" value="C:nucleoplasm"/>
    <property type="evidence" value="ECO:0007669"/>
    <property type="project" value="Ensembl"/>
</dbReference>
<dbReference type="GO" id="GO:0019904">
    <property type="term" value="F:protein domain specific binding"/>
    <property type="evidence" value="ECO:0000266"/>
    <property type="project" value="MGI"/>
</dbReference>
<dbReference type="GO" id="GO:0061630">
    <property type="term" value="F:ubiquitin protein ligase activity"/>
    <property type="evidence" value="ECO:0007669"/>
    <property type="project" value="Ensembl"/>
</dbReference>
<dbReference type="GO" id="GO:0004842">
    <property type="term" value="F:ubiquitin-protein transferase activity"/>
    <property type="evidence" value="ECO:0000314"/>
    <property type="project" value="MGI"/>
</dbReference>
<dbReference type="GO" id="GO:0008270">
    <property type="term" value="F:zinc ion binding"/>
    <property type="evidence" value="ECO:0007669"/>
    <property type="project" value="UniProtKB-KW"/>
</dbReference>
<dbReference type="GO" id="GO:0140374">
    <property type="term" value="P:antiviral innate immune response"/>
    <property type="evidence" value="ECO:0000315"/>
    <property type="project" value="MGI"/>
</dbReference>
<dbReference type="GO" id="GO:0050728">
    <property type="term" value="P:negative regulation of inflammatory response"/>
    <property type="evidence" value="ECO:0007669"/>
    <property type="project" value="Ensembl"/>
</dbReference>
<dbReference type="GO" id="GO:1900226">
    <property type="term" value="P:negative regulation of NLRP3 inflammasome complex assembly"/>
    <property type="evidence" value="ECO:0007669"/>
    <property type="project" value="Ensembl"/>
</dbReference>
<dbReference type="GO" id="GO:0010508">
    <property type="term" value="P:positive regulation of autophagy"/>
    <property type="evidence" value="ECO:0000250"/>
    <property type="project" value="UniProtKB"/>
</dbReference>
<dbReference type="GO" id="GO:0032727">
    <property type="term" value="P:positive regulation of interferon-alpha production"/>
    <property type="evidence" value="ECO:0000315"/>
    <property type="project" value="MGI"/>
</dbReference>
<dbReference type="GO" id="GO:0032728">
    <property type="term" value="P:positive regulation of interferon-beta production"/>
    <property type="evidence" value="ECO:0000315"/>
    <property type="project" value="MGI"/>
</dbReference>
<dbReference type="GO" id="GO:0032461">
    <property type="term" value="P:positive regulation of protein oligomerization"/>
    <property type="evidence" value="ECO:0000315"/>
    <property type="project" value="MGI"/>
</dbReference>
<dbReference type="GO" id="GO:0070936">
    <property type="term" value="P:protein K48-linked ubiquitination"/>
    <property type="evidence" value="ECO:0007669"/>
    <property type="project" value="Ensembl"/>
</dbReference>
<dbReference type="GO" id="GO:0070534">
    <property type="term" value="P:protein K63-linked ubiquitination"/>
    <property type="evidence" value="ECO:0000314"/>
    <property type="project" value="MGI"/>
</dbReference>
<dbReference type="GO" id="GO:0060337">
    <property type="term" value="P:type I interferon-mediated signaling pathway"/>
    <property type="evidence" value="ECO:0000315"/>
    <property type="project" value="MGI"/>
</dbReference>
<dbReference type="CDD" id="cd12896">
    <property type="entry name" value="SPRY_PRY_TRIM65"/>
    <property type="match status" value="1"/>
</dbReference>
<dbReference type="FunFam" id="2.60.120.920:FF:000061">
    <property type="entry name" value="Tripartite motif containing 65"/>
    <property type="match status" value="1"/>
</dbReference>
<dbReference type="FunFam" id="3.30.40.10:FF:000492">
    <property type="entry name" value="Tripartite motif containing 65"/>
    <property type="match status" value="1"/>
</dbReference>
<dbReference type="Gene3D" id="2.60.120.920">
    <property type="match status" value="1"/>
</dbReference>
<dbReference type="Gene3D" id="3.30.160.60">
    <property type="entry name" value="Classic Zinc Finger"/>
    <property type="match status" value="1"/>
</dbReference>
<dbReference type="Gene3D" id="3.30.40.10">
    <property type="entry name" value="Zinc/RING finger domain, C3HC4 (zinc finger)"/>
    <property type="match status" value="1"/>
</dbReference>
<dbReference type="InterPro" id="IPR001870">
    <property type="entry name" value="B30.2/SPRY"/>
</dbReference>
<dbReference type="InterPro" id="IPR043136">
    <property type="entry name" value="B30.2/SPRY_sf"/>
</dbReference>
<dbReference type="InterPro" id="IPR003879">
    <property type="entry name" value="Butyrophylin_SPRY"/>
</dbReference>
<dbReference type="InterPro" id="IPR013320">
    <property type="entry name" value="ConA-like_dom_sf"/>
</dbReference>
<dbReference type="InterPro" id="IPR051051">
    <property type="entry name" value="E3_ubiq-ligase_TRIM/RNF"/>
</dbReference>
<dbReference type="InterPro" id="IPR006574">
    <property type="entry name" value="PRY"/>
</dbReference>
<dbReference type="InterPro" id="IPR003877">
    <property type="entry name" value="SPRY_dom"/>
</dbReference>
<dbReference type="InterPro" id="IPR048222">
    <property type="entry name" value="TRIM65_SPRY_PRY"/>
</dbReference>
<dbReference type="InterPro" id="IPR018957">
    <property type="entry name" value="Znf_C3HC4_RING-type"/>
</dbReference>
<dbReference type="InterPro" id="IPR001841">
    <property type="entry name" value="Znf_RING"/>
</dbReference>
<dbReference type="InterPro" id="IPR013083">
    <property type="entry name" value="Znf_RING/FYVE/PHD"/>
</dbReference>
<dbReference type="InterPro" id="IPR017907">
    <property type="entry name" value="Znf_RING_CS"/>
</dbReference>
<dbReference type="PANTHER" id="PTHR25465">
    <property type="entry name" value="B-BOX DOMAIN CONTAINING"/>
    <property type="match status" value="1"/>
</dbReference>
<dbReference type="PANTHER" id="PTHR25465:SF14">
    <property type="entry name" value="E3 UBIQUITIN-PROTEIN LIGASE TRIM65"/>
    <property type="match status" value="1"/>
</dbReference>
<dbReference type="Pfam" id="PF00622">
    <property type="entry name" value="SPRY"/>
    <property type="match status" value="1"/>
</dbReference>
<dbReference type="Pfam" id="PF00097">
    <property type="entry name" value="zf-C3HC4"/>
    <property type="match status" value="1"/>
</dbReference>
<dbReference type="PRINTS" id="PR01407">
    <property type="entry name" value="BUTYPHLNCDUF"/>
</dbReference>
<dbReference type="SMART" id="SM00589">
    <property type="entry name" value="PRY"/>
    <property type="match status" value="1"/>
</dbReference>
<dbReference type="SMART" id="SM00184">
    <property type="entry name" value="RING"/>
    <property type="match status" value="1"/>
</dbReference>
<dbReference type="SMART" id="SM00449">
    <property type="entry name" value="SPRY"/>
    <property type="match status" value="1"/>
</dbReference>
<dbReference type="SUPFAM" id="SSF57845">
    <property type="entry name" value="B-box zinc-binding domain"/>
    <property type="match status" value="1"/>
</dbReference>
<dbReference type="SUPFAM" id="SSF49899">
    <property type="entry name" value="Concanavalin A-like lectins/glucanases"/>
    <property type="match status" value="1"/>
</dbReference>
<dbReference type="SUPFAM" id="SSF57850">
    <property type="entry name" value="RING/U-box"/>
    <property type="match status" value="1"/>
</dbReference>
<dbReference type="PROSITE" id="PS50188">
    <property type="entry name" value="B302_SPRY"/>
    <property type="match status" value="1"/>
</dbReference>
<dbReference type="PROSITE" id="PS00518">
    <property type="entry name" value="ZF_RING_1"/>
    <property type="match status" value="1"/>
</dbReference>
<dbReference type="PROSITE" id="PS50089">
    <property type="entry name" value="ZF_RING_2"/>
    <property type="match status" value="1"/>
</dbReference>
<accession>Q8BFW4</accession>
<accession>A2A867</accession>
<accession>Q6PGD3</accession>
<proteinExistence type="evidence at protein level"/>
<comment type="function">
    <text evidence="1 5 6">E3 ubiquitin ligase that plays a role in several processes including innate immnity, autophagy or inflammation (PubMed:31310649, PubMed:34512673). Negatively regulates miRNAs by modulating the ubiquitination and stability of TNRC6A, a protein involved in RNA-mediated gene silencing by both micro-RNAs (miRNAs) and short interfering RNAs. This ubiquitination results in the suppressed expression of miR-138-5p leading to increased autophagy (By similarity). Upon enteroviral infection, promotes 'Lys-63'-mediated ubiquitination activation of IFIH1/MDA5 leading to innate signaling cascade. Mechanistically, selectively recognizes MDA5 filaments that occur on dsRNAs (By similarity). Also plays a role in limitation of inflammation through different mechanisms. First, promotes 'Lys-48'-mediated ubiquitination of VCAM1 leading to its degradation and limitation of LPS-induced lung inflammation (PubMed:31310649). In addition, negatively regulates inflammasome activation by promoting 'lys48'-linked ubiquitination of NLRP3 which is critical for the inhibition of NLRP3 inflammasome activation in resting macrophages (PubMed:34512673).</text>
</comment>
<comment type="catalytic activity">
    <reaction evidence="1">
        <text>S-ubiquitinyl-[E2 ubiquitin-conjugating enzyme]-L-cysteine + [acceptor protein]-L-lysine = [E2 ubiquitin-conjugating enzyme]-L-cysteine + N(6)-ubiquitinyl-[acceptor protein]-L-lysine.</text>
        <dbReference type="EC" id="2.3.2.27"/>
    </reaction>
</comment>
<comment type="pathway">
    <text evidence="1">Protein modification; protein ubiquitination.</text>
</comment>
<comment type="subunit">
    <text evidence="1">Homo-multimerizes. Interacts with ARRDC4.</text>
</comment>
<comment type="subcellular location">
    <subcellularLocation>
        <location evidence="1">Cytoplasm</location>
    </subcellularLocation>
</comment>
<comment type="alternative products">
    <event type="alternative splicing"/>
    <isoform>
        <id>Q8BFW4-1</id>
        <name>1</name>
        <sequence type="displayed"/>
    </isoform>
    <isoform>
        <id>Q8BFW4-2</id>
        <name>2</name>
        <sequence type="described" ref="VSP_020368 VSP_020369"/>
    </isoform>
</comment>
<comment type="disruption phenotype">
    <text evidence="6">TRIM65-deficient mice show impaired NLRP3 ubiquitination and enhanced NLRP3 inflammasome activation.</text>
</comment>
<comment type="similarity">
    <text evidence="8">Belongs to the TRIM/RBCC family.</text>
</comment>
<name>TRI65_MOUSE</name>
<sequence length="522" mass="58458">MAAQLLEEDVVTCSICLGRYRDPVTLPCGHSFCGNCIQDSWRSCEKSCPECRQPFPEGAKLSRNVKMSTLLQALPVLPAPPAVTPRRDSATSHSARCLRHGRPLEFFCRTEGLCVCSACTVHDCSHHERALLDVERRVREDQLRARVLVTQQQVAQAETQLQELQEQRSRIESSACTLASVVSRRFSSLLQALEKQQASTLSDIEVAKKQALGQVLNEKQRLTDHLRALSQYDQSVQDLLAQADDCIFFQELQQLPEPTESLGPLTSPQWNEEQQLSNVNQLLSPLCELLLEEKSLPKVAAKAADAGPLETLGPLAPVPSAVCPLRKKLWQNYRNLTFDPETANQYLHLSHKDQRVTHHFQAQGPAKSGSFELWQVQCTQSFQTGQHYWEVRVSDHSVTLGVTYPKLSRQKLGTHTDNIGRGPCSWGLCIQEDSMQAWHNGKSQRLRGLPGQLLGVDLNLTSGCLTFYSLEPRTQPLHTFYAVFSQPLFPVFWLLEGRTLTLCHQPEATLPARPQEEATAPS</sequence>
<organism>
    <name type="scientific">Mus musculus</name>
    <name type="common">Mouse</name>
    <dbReference type="NCBI Taxonomy" id="10090"/>
    <lineage>
        <taxon>Eukaryota</taxon>
        <taxon>Metazoa</taxon>
        <taxon>Chordata</taxon>
        <taxon>Craniata</taxon>
        <taxon>Vertebrata</taxon>
        <taxon>Euteleostomi</taxon>
        <taxon>Mammalia</taxon>
        <taxon>Eutheria</taxon>
        <taxon>Euarchontoglires</taxon>
        <taxon>Glires</taxon>
        <taxon>Rodentia</taxon>
        <taxon>Myomorpha</taxon>
        <taxon>Muroidea</taxon>
        <taxon>Muridae</taxon>
        <taxon>Murinae</taxon>
        <taxon>Mus</taxon>
        <taxon>Mus</taxon>
    </lineage>
</organism>
<protein>
    <recommendedName>
        <fullName>E3 ubiquitin-protein ligase TRIM65</fullName>
        <ecNumber evidence="1">2.3.2.27</ecNumber>
    </recommendedName>
    <alternativeName>
        <fullName>Tripartite motif-containing protein 65</fullName>
    </alternativeName>
</protein>
<feature type="initiator methionine" description="Removed" evidence="1">
    <location>
        <position position="1"/>
    </location>
</feature>
<feature type="chain" id="PRO_0000249192" description="E3 ubiquitin-protein ligase TRIM65">
    <location>
        <begin position="2"/>
        <end position="522"/>
    </location>
</feature>
<feature type="domain" description="B30.2/SPRY" evidence="4">
    <location>
        <begin position="316"/>
        <end position="509"/>
    </location>
</feature>
<feature type="zinc finger region" description="RING-type" evidence="3">
    <location>
        <begin position="13"/>
        <end position="52"/>
    </location>
</feature>
<feature type="zinc finger region" description="B box-type">
    <location>
        <begin position="92"/>
        <end position="134"/>
    </location>
</feature>
<feature type="coiled-coil region" evidence="2">
    <location>
        <begin position="141"/>
        <end position="229"/>
    </location>
</feature>
<feature type="modified residue" description="N-acetylalanine" evidence="1">
    <location>
        <position position="2"/>
    </location>
</feature>
<feature type="modified residue" description="Phosphoserine" evidence="9">
    <location>
        <position position="187"/>
    </location>
</feature>
<feature type="splice variant" id="VSP_020368" description="In isoform 2." evidence="7">
    <original>RVSDH</original>
    <variation>CVCNA</variation>
    <location>
        <begin position="392"/>
        <end position="396"/>
    </location>
</feature>
<feature type="splice variant" id="VSP_020369" description="In isoform 2." evidence="7">
    <location>
        <begin position="397"/>
        <end position="522"/>
    </location>
</feature>
<evidence type="ECO:0000250" key="1">
    <source>
        <dbReference type="UniProtKB" id="Q6PJ69"/>
    </source>
</evidence>
<evidence type="ECO:0000255" key="2"/>
<evidence type="ECO:0000255" key="3">
    <source>
        <dbReference type="PROSITE-ProRule" id="PRU00175"/>
    </source>
</evidence>
<evidence type="ECO:0000255" key="4">
    <source>
        <dbReference type="PROSITE-ProRule" id="PRU00548"/>
    </source>
</evidence>
<evidence type="ECO:0000269" key="5">
    <source>
    </source>
</evidence>
<evidence type="ECO:0000269" key="6">
    <source>
    </source>
</evidence>
<evidence type="ECO:0000303" key="7">
    <source>
    </source>
</evidence>
<evidence type="ECO:0000305" key="8"/>
<evidence type="ECO:0007744" key="9">
    <source>
    </source>
</evidence>